<proteinExistence type="predicted"/>
<accession>Q58935</accession>
<dbReference type="EMBL" id="L77117">
    <property type="protein sequence ID" value="AAB99569.1"/>
    <property type="molecule type" value="Genomic_DNA"/>
</dbReference>
<dbReference type="PIR" id="C64492">
    <property type="entry name" value="C64492"/>
</dbReference>
<dbReference type="RefSeq" id="WP_010871064.1">
    <property type="nucleotide sequence ID" value="NC_000909.1"/>
</dbReference>
<dbReference type="STRING" id="243232.MJ_1540"/>
<dbReference type="PaxDb" id="243232-MJ_1540"/>
<dbReference type="EnsemblBacteria" id="AAB99569">
    <property type="protein sequence ID" value="AAB99569"/>
    <property type="gene ID" value="MJ_1540"/>
</dbReference>
<dbReference type="GeneID" id="1452448"/>
<dbReference type="KEGG" id="mja:MJ_1540"/>
<dbReference type="eggNOG" id="arCOG08298">
    <property type="taxonomic scope" value="Archaea"/>
</dbReference>
<dbReference type="HOGENOM" id="CLU_1881070_0_0_2"/>
<dbReference type="InParanoid" id="Q58935"/>
<dbReference type="OrthoDB" id="65819at2157"/>
<dbReference type="Proteomes" id="UP000000805">
    <property type="component" value="Chromosome"/>
</dbReference>
<feature type="chain" id="PRO_0000107398" description="Uncharacterized protein MJ1540">
    <location>
        <begin position="1"/>
        <end position="136"/>
    </location>
</feature>
<organism>
    <name type="scientific">Methanocaldococcus jannaschii (strain ATCC 43067 / DSM 2661 / JAL-1 / JCM 10045 / NBRC 100440)</name>
    <name type="common">Methanococcus jannaschii</name>
    <dbReference type="NCBI Taxonomy" id="243232"/>
    <lineage>
        <taxon>Archaea</taxon>
        <taxon>Methanobacteriati</taxon>
        <taxon>Methanobacteriota</taxon>
        <taxon>Methanomada group</taxon>
        <taxon>Methanococci</taxon>
        <taxon>Methanococcales</taxon>
        <taxon>Methanocaldococcaceae</taxon>
        <taxon>Methanocaldococcus</taxon>
    </lineage>
</organism>
<reference key="1">
    <citation type="journal article" date="1996" name="Science">
        <title>Complete genome sequence of the methanogenic archaeon, Methanococcus jannaschii.</title>
        <authorList>
            <person name="Bult C.J."/>
            <person name="White O."/>
            <person name="Olsen G.J."/>
            <person name="Zhou L."/>
            <person name="Fleischmann R.D."/>
            <person name="Sutton G.G."/>
            <person name="Blake J.A."/>
            <person name="FitzGerald L.M."/>
            <person name="Clayton R.A."/>
            <person name="Gocayne J.D."/>
            <person name="Kerlavage A.R."/>
            <person name="Dougherty B.A."/>
            <person name="Tomb J.-F."/>
            <person name="Adams M.D."/>
            <person name="Reich C.I."/>
            <person name="Overbeek R."/>
            <person name="Kirkness E.F."/>
            <person name="Weinstock K.G."/>
            <person name="Merrick J.M."/>
            <person name="Glodek A."/>
            <person name="Scott J.L."/>
            <person name="Geoghagen N.S.M."/>
            <person name="Weidman J.F."/>
            <person name="Fuhrmann J.L."/>
            <person name="Nguyen D."/>
            <person name="Utterback T.R."/>
            <person name="Kelley J.M."/>
            <person name="Peterson J.D."/>
            <person name="Sadow P.W."/>
            <person name="Hanna M.C."/>
            <person name="Cotton M.D."/>
            <person name="Roberts K.M."/>
            <person name="Hurst M.A."/>
            <person name="Kaine B.P."/>
            <person name="Borodovsky M."/>
            <person name="Klenk H.-P."/>
            <person name="Fraser C.M."/>
            <person name="Smith H.O."/>
            <person name="Woese C.R."/>
            <person name="Venter J.C."/>
        </authorList>
    </citation>
    <scope>NUCLEOTIDE SEQUENCE [LARGE SCALE GENOMIC DNA]</scope>
    <source>
        <strain>ATCC 43067 / DSM 2661 / JAL-1 / JCM 10045 / NBRC 100440</strain>
    </source>
</reference>
<protein>
    <recommendedName>
        <fullName>Uncharacterized protein MJ1540</fullName>
    </recommendedName>
</protein>
<sequence>MLKELNYLFLFQRLIKNGSLEIALTNIFSLGISRDYITINIENIKTLKEIMEAVSSKSANKKLKSFLEKIEDLKIFLSEASKIAEILVNNRKTFILKYKGKEVLIVGYDARGGIFLKNIKITDKLALIKMLNEFKN</sequence>
<gene>
    <name type="ordered locus">MJ1540</name>
</gene>
<keyword id="KW-1185">Reference proteome</keyword>
<name>Y1540_METJA</name>